<keyword id="KW-0008">Acetylcholine receptor inhibiting toxin</keyword>
<keyword id="KW-0903">Direct protein sequencing</keyword>
<keyword id="KW-1015">Disulfide bond</keyword>
<keyword id="KW-0872">Ion channel impairing toxin</keyword>
<keyword id="KW-0528">Neurotoxin</keyword>
<keyword id="KW-0629">Postsynaptic neurotoxin</keyword>
<keyword id="KW-0964">Secreted</keyword>
<keyword id="KW-0800">Toxin</keyword>
<feature type="chain" id="PRO_0000371724" description="Short neurotoxin MS11" evidence="2">
    <location>
        <begin position="1"/>
        <end position="58"/>
    </location>
</feature>
<feature type="disulfide bond" evidence="1">
    <location>
        <begin position="3"/>
        <end position="20"/>
    </location>
</feature>
<feature type="disulfide bond" evidence="1">
    <location>
        <begin position="13"/>
        <end position="38"/>
    </location>
</feature>
<feature type="disulfide bond" evidence="1">
    <location>
        <begin position="42"/>
        <end position="50"/>
    </location>
</feature>
<feature type="disulfide bond" evidence="1">
    <location>
        <begin position="51"/>
        <end position="56"/>
    </location>
</feature>
<evidence type="ECO:0000250" key="1">
    <source>
        <dbReference type="UniProtKB" id="P81783"/>
    </source>
</evidence>
<evidence type="ECO:0000269" key="2">
    <source>
    </source>
</evidence>
<evidence type="ECO:0000303" key="3">
    <source>
    </source>
</evidence>
<evidence type="ECO:0000305" key="4"/>
<proteinExistence type="evidence at protein level"/>
<name>3SX_MICSU</name>
<dbReference type="SMR" id="P86094"/>
<dbReference type="TCDB" id="8.B.23.1.4">
    <property type="family name" value="the mambalgin (mambalgin) family"/>
</dbReference>
<dbReference type="GO" id="GO:0005576">
    <property type="term" value="C:extracellular region"/>
    <property type="evidence" value="ECO:0000314"/>
    <property type="project" value="UniProtKB"/>
</dbReference>
<dbReference type="GO" id="GO:0030550">
    <property type="term" value="F:acetylcholine receptor inhibitor activity"/>
    <property type="evidence" value="ECO:0000314"/>
    <property type="project" value="UniProtKB"/>
</dbReference>
<dbReference type="GO" id="GO:0099106">
    <property type="term" value="F:ion channel regulator activity"/>
    <property type="evidence" value="ECO:0007669"/>
    <property type="project" value="UniProtKB-KW"/>
</dbReference>
<dbReference type="GO" id="GO:0090729">
    <property type="term" value="F:toxin activity"/>
    <property type="evidence" value="ECO:0000314"/>
    <property type="project" value="UniProtKB"/>
</dbReference>
<dbReference type="GO" id="GO:0044504">
    <property type="term" value="P:modulation of receptor activity in another organism"/>
    <property type="evidence" value="ECO:0000314"/>
    <property type="project" value="UniProtKB"/>
</dbReference>
<dbReference type="CDD" id="cd00206">
    <property type="entry name" value="TFP_snake_toxin"/>
    <property type="match status" value="1"/>
</dbReference>
<dbReference type="Gene3D" id="2.10.60.10">
    <property type="entry name" value="CD59"/>
    <property type="match status" value="1"/>
</dbReference>
<dbReference type="InterPro" id="IPR003571">
    <property type="entry name" value="Snake_3FTx"/>
</dbReference>
<dbReference type="InterPro" id="IPR045860">
    <property type="entry name" value="Snake_toxin-like_sf"/>
</dbReference>
<dbReference type="InterPro" id="IPR054131">
    <property type="entry name" value="Toxin_cobra-type"/>
</dbReference>
<dbReference type="Pfam" id="PF21947">
    <property type="entry name" value="Toxin_cobra-type"/>
    <property type="match status" value="1"/>
</dbReference>
<dbReference type="SUPFAM" id="SSF57302">
    <property type="entry name" value="Snake toxin-like"/>
    <property type="match status" value="1"/>
</dbReference>
<reference key="1">
    <citation type="journal article" date="2008" name="Proteomics">
        <title>Proteomic analysis of the venom from the fish eating coral snake Micrurus surinamensis: novel toxins, their function and phylogeny.</title>
        <authorList>
            <person name="Olamendi-Portugal T."/>
            <person name="Batista C.V.F."/>
            <person name="Restano-Cassulini R."/>
            <person name="Pando V."/>
            <person name="Villa-Hernandez O."/>
            <person name="Zavaleta-Martinez-Vargas A."/>
            <person name="Salas-Arruz M.C."/>
            <person name="Rodriguez de la Vega R.C."/>
            <person name="Becerril B."/>
            <person name="Possani L.D."/>
        </authorList>
    </citation>
    <scope>PROTEIN SEQUENCE</scope>
    <scope>FUNCTION</scope>
    <scope>SUBCELLULAR LOCATION</scope>
    <source>
        <tissue>Venom</tissue>
    </source>
</reference>
<comment type="function">
    <text evidence="2">Produces peripheral paralysis by blocking neuromuscular transmission at the postsynaptic site. Binds to and inhibits the endogenous nicotinic acetylcholine receptors (nAChR) in the human rhabdomyosarcoma TE 671 cell line with an IC(50) of 266 mM. Not toxic to mice by intraperitoneal injection or to zebrafish by injection at the back dorsolateral region.</text>
</comment>
<comment type="subcellular location">
    <subcellularLocation>
        <location evidence="2">Secreted</location>
    </subcellularLocation>
</comment>
<comment type="tissue specificity">
    <text evidence="4">Expressed by the venom gland.</text>
</comment>
<comment type="similarity">
    <text evidence="4">Belongs to the three-finger toxin family. Short-chain subfamily.</text>
</comment>
<protein>
    <recommendedName>
        <fullName evidence="3">Short neurotoxin MS11</fullName>
    </recommendedName>
    <alternativeName>
        <fullName>Three-finger toxin</fullName>
        <shortName>3FTx</shortName>
    </alternativeName>
</protein>
<accession>P86094</accession>
<organism>
    <name type="scientific">Micrurus surinamensis</name>
    <name type="common">Surinam coral snake</name>
    <dbReference type="NCBI Taxonomy" id="129470"/>
    <lineage>
        <taxon>Eukaryota</taxon>
        <taxon>Metazoa</taxon>
        <taxon>Chordata</taxon>
        <taxon>Craniata</taxon>
        <taxon>Vertebrata</taxon>
        <taxon>Euteleostomi</taxon>
        <taxon>Lepidosauria</taxon>
        <taxon>Squamata</taxon>
        <taxon>Bifurcata</taxon>
        <taxon>Unidentata</taxon>
        <taxon>Episquamata</taxon>
        <taxon>Toxicofera</taxon>
        <taxon>Serpentes</taxon>
        <taxon>Colubroidea</taxon>
        <taxon>Elapidae</taxon>
        <taxon>Elapinae</taxon>
        <taxon>Micrurus</taxon>
    </lineage>
</organism>
<sequence>LKCYGIFRKIMTCPQGQNICEKFAYSPMHNGWMYSWGCTSNCHKGPLDKCCSTDLCNY</sequence>